<sequence>MSGPHRTFSFEQRGDGEAHSSFMDHAMHPQYDDVSPISNMSSSPGHMNETHHGLASVPEDNHQGWGQARGPSPSNRTGFTATPEMDNLGPASVGGGISGIALGVANSHDRLSGVEARRGTDGQEANIPAERGYNTTGSDNPYIPAPPDMGGYGSSETLHPRQSYGSNVALGAAAGPAGQLTPGHSATHLGTSNSSQRNLYDAPYQSAGGLSAGPYQRHSAYSSNDLPLDINPEEIADDGDDGFAPAGNSRSSARRSQAVPAAAGGAAAGGVLGGIGGLFNNRNPAETSYDPVPGAGLEAGEKSQWVKPKPSTGSRKRGWIIGAILAVIIIGAIVGGAVGGTIGHKDSGDSASGSSASTQSASGDTDTNGDLDKNSAEIKALMNNKDLHKVFPGMDYTPWGVQYPLCLKYPPSQNNVTRDMAVLAQLTNNVRLYGTDCNQTEMVLHAIDKLDLKDMKVWLGVWIDTNETTSRRQIDQLYKIVDDAKDISIFNGAIVGNEALFRAGDNKITAQATLTKYMQEVRDHFKKHDIKMPIATSDLGDNWNAELVQIADVVMSNVHPFFGGIPVDQAAAWTWRFWQDHDVILTQGTDKRQVISEVGWPSGGGNDCGKGANCPDDTSGAVAGIDELNKFMEDWVCQALDNGTDYFWFEAFDEPWKIEFNTKNENWEDKWGLMDPARKLKSGLKIPDCGGKTAA</sequence>
<dbReference type="EC" id="3.2.1.39"/>
<dbReference type="EMBL" id="DS027049">
    <property type="protein sequence ID" value="EAW12748.1"/>
    <property type="molecule type" value="Genomic_DNA"/>
</dbReference>
<dbReference type="RefSeq" id="XP_001274174.1">
    <property type="nucleotide sequence ID" value="XM_001274173.1"/>
</dbReference>
<dbReference type="SMR" id="A1CAI0"/>
<dbReference type="STRING" id="344612.A1CAI0"/>
<dbReference type="GlyCosmos" id="A1CAI0">
    <property type="glycosylation" value="4 sites, No reported glycans"/>
</dbReference>
<dbReference type="EnsemblFungi" id="EAW12748">
    <property type="protein sequence ID" value="EAW12748"/>
    <property type="gene ID" value="ACLA_011750"/>
</dbReference>
<dbReference type="GeneID" id="4706510"/>
<dbReference type="KEGG" id="act:ACLA_011750"/>
<dbReference type="VEuPathDB" id="FungiDB:ACLA_011750"/>
<dbReference type="eggNOG" id="ENOG502QTKT">
    <property type="taxonomic scope" value="Eukaryota"/>
</dbReference>
<dbReference type="HOGENOM" id="CLU_011476_0_1_1"/>
<dbReference type="OMA" id="QYPDCLK"/>
<dbReference type="OrthoDB" id="68336at2759"/>
<dbReference type="Proteomes" id="UP000006701">
    <property type="component" value="Unassembled WGS sequence"/>
</dbReference>
<dbReference type="GO" id="GO:0009986">
    <property type="term" value="C:cell surface"/>
    <property type="evidence" value="ECO:0007669"/>
    <property type="project" value="TreeGrafter"/>
</dbReference>
<dbReference type="GO" id="GO:0005576">
    <property type="term" value="C:extracellular region"/>
    <property type="evidence" value="ECO:0007669"/>
    <property type="project" value="TreeGrafter"/>
</dbReference>
<dbReference type="GO" id="GO:0009277">
    <property type="term" value="C:fungal-type cell wall"/>
    <property type="evidence" value="ECO:0007669"/>
    <property type="project" value="TreeGrafter"/>
</dbReference>
<dbReference type="GO" id="GO:0005886">
    <property type="term" value="C:plasma membrane"/>
    <property type="evidence" value="ECO:0007669"/>
    <property type="project" value="UniProtKB-SubCell"/>
</dbReference>
<dbReference type="GO" id="GO:0042973">
    <property type="term" value="F:glucan endo-1,3-beta-D-glucosidase activity"/>
    <property type="evidence" value="ECO:0007669"/>
    <property type="project" value="UniProtKB-EC"/>
</dbReference>
<dbReference type="GO" id="GO:0071555">
    <property type="term" value="P:cell wall organization"/>
    <property type="evidence" value="ECO:0007669"/>
    <property type="project" value="UniProtKB-KW"/>
</dbReference>
<dbReference type="GO" id="GO:0000272">
    <property type="term" value="P:polysaccharide catabolic process"/>
    <property type="evidence" value="ECO:0007669"/>
    <property type="project" value="UniProtKB-KW"/>
</dbReference>
<dbReference type="FunFam" id="3.20.20.80:FF:000151">
    <property type="entry name" value="Glucan endo-1,3-beta-glucosidase btgC"/>
    <property type="match status" value="1"/>
</dbReference>
<dbReference type="Gene3D" id="3.20.20.80">
    <property type="entry name" value="Glycosidases"/>
    <property type="match status" value="1"/>
</dbReference>
<dbReference type="InterPro" id="IPR050732">
    <property type="entry name" value="Beta-glucan_modifiers"/>
</dbReference>
<dbReference type="InterPro" id="IPR017853">
    <property type="entry name" value="Glycoside_hydrolase_SF"/>
</dbReference>
<dbReference type="PANTHER" id="PTHR16631">
    <property type="entry name" value="GLUCAN 1,3-BETA-GLUCOSIDASE"/>
    <property type="match status" value="1"/>
</dbReference>
<dbReference type="PANTHER" id="PTHR16631:SF17">
    <property type="entry name" value="GLUCAN ENDO-1,3-BETA-GLUCOSIDASE BTGC"/>
    <property type="match status" value="1"/>
</dbReference>
<dbReference type="SUPFAM" id="SSF51445">
    <property type="entry name" value="(Trans)glycosidases"/>
    <property type="match status" value="1"/>
</dbReference>
<name>BTGC_ASPCL</name>
<keyword id="KW-0119">Carbohydrate metabolism</keyword>
<keyword id="KW-1003">Cell membrane</keyword>
<keyword id="KW-0961">Cell wall biogenesis/degradation</keyword>
<keyword id="KW-0325">Glycoprotein</keyword>
<keyword id="KW-0378">Hydrolase</keyword>
<keyword id="KW-0472">Membrane</keyword>
<keyword id="KW-0624">Polysaccharide degradation</keyword>
<keyword id="KW-1185">Reference proteome</keyword>
<keyword id="KW-0735">Signal-anchor</keyword>
<keyword id="KW-0812">Transmembrane</keyword>
<keyword id="KW-1133">Transmembrane helix</keyword>
<evidence type="ECO:0000250" key="1"/>
<evidence type="ECO:0000250" key="2">
    <source>
        <dbReference type="UniProtKB" id="O22317"/>
    </source>
</evidence>
<evidence type="ECO:0000255" key="3"/>
<evidence type="ECO:0000256" key="4">
    <source>
        <dbReference type="SAM" id="MobiDB-lite"/>
    </source>
</evidence>
<evidence type="ECO:0000305" key="5"/>
<accession>A1CAI0</accession>
<protein>
    <recommendedName>
        <fullName>Probable glucan endo-1,3-beta-glucosidase btgC</fullName>
        <ecNumber>3.2.1.39</ecNumber>
    </recommendedName>
    <alternativeName>
        <fullName>Endo-1,3-beta-glucanase btgC</fullName>
    </alternativeName>
    <alternativeName>
        <fullName>Laminarinase btgC</fullName>
    </alternativeName>
</protein>
<reference key="1">
    <citation type="journal article" date="2008" name="PLoS Genet.">
        <title>Genomic islands in the pathogenic filamentous fungus Aspergillus fumigatus.</title>
        <authorList>
            <person name="Fedorova N.D."/>
            <person name="Khaldi N."/>
            <person name="Joardar V.S."/>
            <person name="Maiti R."/>
            <person name="Amedeo P."/>
            <person name="Anderson M.J."/>
            <person name="Crabtree J."/>
            <person name="Silva J.C."/>
            <person name="Badger J.H."/>
            <person name="Albarraq A."/>
            <person name="Angiuoli S."/>
            <person name="Bussey H."/>
            <person name="Bowyer P."/>
            <person name="Cotty P.J."/>
            <person name="Dyer P.S."/>
            <person name="Egan A."/>
            <person name="Galens K."/>
            <person name="Fraser-Liggett C.M."/>
            <person name="Haas B.J."/>
            <person name="Inman J.M."/>
            <person name="Kent R."/>
            <person name="Lemieux S."/>
            <person name="Malavazi I."/>
            <person name="Orvis J."/>
            <person name="Roemer T."/>
            <person name="Ronning C.M."/>
            <person name="Sundaram J.P."/>
            <person name="Sutton G."/>
            <person name="Turner G."/>
            <person name="Venter J.C."/>
            <person name="White O.R."/>
            <person name="Whitty B.R."/>
            <person name="Youngman P."/>
            <person name="Wolfe K.H."/>
            <person name="Goldman G.H."/>
            <person name="Wortman J.R."/>
            <person name="Jiang B."/>
            <person name="Denning D.W."/>
            <person name="Nierman W.C."/>
        </authorList>
    </citation>
    <scope>NUCLEOTIDE SEQUENCE [LARGE SCALE GENOMIC DNA]</scope>
    <source>
        <strain>ATCC 1007 / CBS 513.65 / DSM 816 / NCTC 3887 / NRRL 1 / QM 1276 / 107</strain>
    </source>
</reference>
<gene>
    <name type="primary">btgC</name>
    <name type="ORF">ACLA_011750</name>
</gene>
<comment type="function">
    <text evidence="1">Glucanases play a role in cell expansion during growth, in cell-cell fusion during mating, and in spore release during sporulation. This enzyme may be involved in beta-glucan degradation. Active on laminarin and lichenan (By similarity).</text>
</comment>
<comment type="catalytic activity">
    <reaction>
        <text>Hydrolysis of (1-&gt;3)-beta-D-glucosidic linkages in (1-&gt;3)-beta-D-glucans.</text>
        <dbReference type="EC" id="3.2.1.39"/>
    </reaction>
</comment>
<comment type="subcellular location">
    <subcellularLocation>
        <location evidence="1">Cell membrane</location>
        <topology evidence="1">Single-pass type II membrane protein</topology>
    </subcellularLocation>
</comment>
<comment type="similarity">
    <text evidence="5">Belongs to the glycosyl hydrolase 17 family.</text>
</comment>
<feature type="chain" id="PRO_0000395121" description="Probable glucan endo-1,3-beta-glucosidase btgC">
    <location>
        <begin position="1"/>
        <end position="695"/>
    </location>
</feature>
<feature type="topological domain" description="Cytoplasmic" evidence="3">
    <location>
        <begin position="1"/>
        <end position="317"/>
    </location>
</feature>
<feature type="transmembrane region" description="Helical; Signal-anchor for type II membrane protein" evidence="3">
    <location>
        <begin position="318"/>
        <end position="338"/>
    </location>
</feature>
<feature type="topological domain" description="Extracellular" evidence="3">
    <location>
        <begin position="339"/>
        <end position="695"/>
    </location>
</feature>
<feature type="region of interest" description="Disordered" evidence="4">
    <location>
        <begin position="1"/>
        <end position="53"/>
    </location>
</feature>
<feature type="region of interest" description="Disordered" evidence="4">
    <location>
        <begin position="117"/>
        <end position="140"/>
    </location>
</feature>
<feature type="region of interest" description="Disordered" evidence="4">
    <location>
        <begin position="175"/>
        <end position="258"/>
    </location>
</feature>
<feature type="region of interest" description="Disordered" evidence="4">
    <location>
        <begin position="286"/>
        <end position="314"/>
    </location>
</feature>
<feature type="region of interest" description="Disordered" evidence="4">
    <location>
        <begin position="346"/>
        <end position="372"/>
    </location>
</feature>
<feature type="compositionally biased region" description="Polar residues" evidence="4">
    <location>
        <begin position="36"/>
        <end position="45"/>
    </location>
</feature>
<feature type="compositionally biased region" description="Polar residues" evidence="4">
    <location>
        <begin position="188"/>
        <end position="198"/>
    </location>
</feature>
<feature type="compositionally biased region" description="Acidic residues" evidence="4">
    <location>
        <begin position="231"/>
        <end position="241"/>
    </location>
</feature>
<feature type="compositionally biased region" description="Low complexity" evidence="4">
    <location>
        <begin position="349"/>
        <end position="366"/>
    </location>
</feature>
<feature type="active site" description="Proton donor" evidence="2">
    <location>
        <position position="498"/>
    </location>
</feature>
<feature type="active site" description="Nucleophile" evidence="2">
    <location>
        <position position="597"/>
    </location>
</feature>
<feature type="glycosylation site" description="N-linked (GlcNAc...) asparagine" evidence="3">
    <location>
        <position position="415"/>
    </location>
</feature>
<feature type="glycosylation site" description="N-linked (GlcNAc...) asparagine" evidence="3">
    <location>
        <position position="438"/>
    </location>
</feature>
<feature type="glycosylation site" description="N-linked (GlcNAc...) asparagine" evidence="3">
    <location>
        <position position="466"/>
    </location>
</feature>
<feature type="glycosylation site" description="N-linked (GlcNAc...) asparagine" evidence="3">
    <location>
        <position position="642"/>
    </location>
</feature>
<proteinExistence type="inferred from homology"/>
<organism>
    <name type="scientific">Aspergillus clavatus (strain ATCC 1007 / CBS 513.65 / DSM 816 / NCTC 3887 / NRRL 1 / QM 1276 / 107)</name>
    <dbReference type="NCBI Taxonomy" id="344612"/>
    <lineage>
        <taxon>Eukaryota</taxon>
        <taxon>Fungi</taxon>
        <taxon>Dikarya</taxon>
        <taxon>Ascomycota</taxon>
        <taxon>Pezizomycotina</taxon>
        <taxon>Eurotiomycetes</taxon>
        <taxon>Eurotiomycetidae</taxon>
        <taxon>Eurotiales</taxon>
        <taxon>Aspergillaceae</taxon>
        <taxon>Aspergillus</taxon>
        <taxon>Aspergillus subgen. Fumigati</taxon>
    </lineage>
</organism>